<keyword id="KW-0963">Cytoplasm</keyword>
<keyword id="KW-0903">Direct protein sequencing</keyword>
<keyword id="KW-0275">Fatty acid biosynthesis</keyword>
<keyword id="KW-0276">Fatty acid metabolism</keyword>
<keyword id="KW-0444">Lipid biosynthesis</keyword>
<keyword id="KW-0443">Lipid metabolism</keyword>
<keyword id="KW-0596">Phosphopantetheine</keyword>
<keyword id="KW-0597">Phosphoprotein</keyword>
<proteinExistence type="evidence at protein level"/>
<protein>
    <recommendedName>
        <fullName evidence="1">Acyl carrier protein</fullName>
        <shortName evidence="1">ACP</shortName>
    </recommendedName>
</protein>
<organism>
    <name type="scientific">Anabaena variabilis</name>
    <dbReference type="NCBI Taxonomy" id="264691"/>
    <lineage>
        <taxon>Bacteria</taxon>
        <taxon>Bacillati</taxon>
        <taxon>Cyanobacteriota</taxon>
        <taxon>Cyanophyceae</taxon>
        <taxon>Nostocales</taxon>
        <taxon>Nostocaceae</taxon>
        <taxon>Trichormus</taxon>
    </lineage>
</organism>
<reference key="1">
    <citation type="journal article" date="1990" name="Eur. J. Biochem.">
        <title>Purification and characterization of acyl carrier protein from two cyanobacteria species.</title>
        <authorList>
            <person name="Froehlich J.E."/>
            <person name="Poorman R."/>
            <person name="Reardon E."/>
            <person name="Barnum S.R."/>
            <person name="Jaworski J.G."/>
        </authorList>
    </citation>
    <scope>PROTEIN SEQUENCE OF 2-77</scope>
    <source>
        <strain>PCC 6309 / ATCC 29211</strain>
    </source>
</reference>
<feature type="initiator methionine" description="Removed" evidence="3">
    <location>
        <position position="1"/>
    </location>
</feature>
<feature type="chain" id="PRO_0000180093" description="Acyl carrier protein">
    <location>
        <begin position="2"/>
        <end position="77" status="greater than"/>
    </location>
</feature>
<feature type="domain" description="Carrier" evidence="2">
    <location>
        <begin position="4"/>
        <end position="77"/>
    </location>
</feature>
<feature type="modified residue" description="O-(pantetheine 4'-phosphoryl)serine" evidence="2">
    <location>
        <position position="40"/>
    </location>
</feature>
<feature type="non-terminal residue">
    <location>
        <position position="77"/>
    </location>
</feature>
<accession>P20803</accession>
<name>ACP_ANAVA</name>
<gene>
    <name evidence="1" type="primary">acpP</name>
</gene>
<sequence length="77" mass="8496">MSQSETFEKVKKIVIEQLSVENPDTVTPEASFANDLQADSLDTVELVMALEEEFDIEIPDEAAEKITTVQAAVDXIN</sequence>
<evidence type="ECO:0000255" key="1">
    <source>
        <dbReference type="HAMAP-Rule" id="MF_01217"/>
    </source>
</evidence>
<evidence type="ECO:0000255" key="2">
    <source>
        <dbReference type="PROSITE-ProRule" id="PRU00258"/>
    </source>
</evidence>
<evidence type="ECO:0000269" key="3">
    <source>
    </source>
</evidence>
<dbReference type="PIR" id="S13819">
    <property type="entry name" value="S13819"/>
</dbReference>
<dbReference type="UniPathway" id="UPA00094"/>
<dbReference type="GO" id="GO:0005829">
    <property type="term" value="C:cytosol"/>
    <property type="evidence" value="ECO:0007669"/>
    <property type="project" value="TreeGrafter"/>
</dbReference>
<dbReference type="GO" id="GO:0016020">
    <property type="term" value="C:membrane"/>
    <property type="evidence" value="ECO:0007669"/>
    <property type="project" value="GOC"/>
</dbReference>
<dbReference type="GO" id="GO:0000035">
    <property type="term" value="F:acyl binding"/>
    <property type="evidence" value="ECO:0007669"/>
    <property type="project" value="TreeGrafter"/>
</dbReference>
<dbReference type="GO" id="GO:0000036">
    <property type="term" value="F:acyl carrier activity"/>
    <property type="evidence" value="ECO:0007669"/>
    <property type="project" value="TreeGrafter"/>
</dbReference>
<dbReference type="GO" id="GO:0009245">
    <property type="term" value="P:lipid A biosynthetic process"/>
    <property type="evidence" value="ECO:0007669"/>
    <property type="project" value="TreeGrafter"/>
</dbReference>
<dbReference type="FunFam" id="1.10.1200.10:FF:000003">
    <property type="entry name" value="Acyl carrier protein"/>
    <property type="match status" value="1"/>
</dbReference>
<dbReference type="Gene3D" id="1.10.1200.10">
    <property type="entry name" value="ACP-like"/>
    <property type="match status" value="1"/>
</dbReference>
<dbReference type="HAMAP" id="MF_01217">
    <property type="entry name" value="Acyl_carrier"/>
    <property type="match status" value="1"/>
</dbReference>
<dbReference type="InterPro" id="IPR003231">
    <property type="entry name" value="ACP"/>
</dbReference>
<dbReference type="InterPro" id="IPR036736">
    <property type="entry name" value="ACP-like_sf"/>
</dbReference>
<dbReference type="InterPro" id="IPR009081">
    <property type="entry name" value="PP-bd_ACP"/>
</dbReference>
<dbReference type="InterPro" id="IPR006162">
    <property type="entry name" value="Ppantetheine_attach_site"/>
</dbReference>
<dbReference type="NCBIfam" id="TIGR00517">
    <property type="entry name" value="acyl_carrier"/>
    <property type="match status" value="1"/>
</dbReference>
<dbReference type="NCBIfam" id="NF002148">
    <property type="entry name" value="PRK00982.1-2"/>
    <property type="match status" value="1"/>
</dbReference>
<dbReference type="NCBIfam" id="NF002149">
    <property type="entry name" value="PRK00982.1-3"/>
    <property type="match status" value="1"/>
</dbReference>
<dbReference type="NCBIfam" id="NF002150">
    <property type="entry name" value="PRK00982.1-4"/>
    <property type="match status" value="1"/>
</dbReference>
<dbReference type="NCBIfam" id="NF002151">
    <property type="entry name" value="PRK00982.1-5"/>
    <property type="match status" value="1"/>
</dbReference>
<dbReference type="PANTHER" id="PTHR20863">
    <property type="entry name" value="ACYL CARRIER PROTEIN"/>
    <property type="match status" value="1"/>
</dbReference>
<dbReference type="PANTHER" id="PTHR20863:SF76">
    <property type="entry name" value="CARRIER DOMAIN-CONTAINING PROTEIN"/>
    <property type="match status" value="1"/>
</dbReference>
<dbReference type="Pfam" id="PF00550">
    <property type="entry name" value="PP-binding"/>
    <property type="match status" value="1"/>
</dbReference>
<dbReference type="SUPFAM" id="SSF47336">
    <property type="entry name" value="ACP-like"/>
    <property type="match status" value="1"/>
</dbReference>
<dbReference type="PROSITE" id="PS50075">
    <property type="entry name" value="CARRIER"/>
    <property type="match status" value="1"/>
</dbReference>
<dbReference type="PROSITE" id="PS00012">
    <property type="entry name" value="PHOSPHOPANTETHEINE"/>
    <property type="match status" value="1"/>
</dbReference>
<comment type="function">
    <text>Carrier of the growing fatty acid chain in fatty acid biosynthesis.</text>
</comment>
<comment type="pathway">
    <text evidence="1">Lipid metabolism; fatty acid biosynthesis.</text>
</comment>
<comment type="subcellular location">
    <subcellularLocation>
        <location evidence="1">Cytoplasm</location>
    </subcellularLocation>
</comment>
<comment type="PTM">
    <text>4'-phosphopantetheine is transferred from CoA to a specific serine of apo-ACP by AcpS. This modification is essential for activity because fatty acids are bound in thioester linkage to the sulfhydryl of the prosthetic group.</text>
</comment>
<comment type="similarity">
    <text evidence="1">Belongs to the acyl carrier protein (ACP) family.</text>
</comment>